<sequence>MRSMIDNLTVQSEHLNSLASQHENEAACASSGVSAAAGLANAVSTSHGSYCAQFNDTLKMYEDAHRTLGESLHTGGIDLARVLRVAAAMYCDADEICGSDIKSAFG</sequence>
<comment type="similarity">
    <text evidence="1">Belongs to the EspC family.</text>
</comment>
<dbReference type="EMBL" id="U00015">
    <property type="protein sequence ID" value="AAC43224.1"/>
    <property type="molecule type" value="Genomic_DNA"/>
</dbReference>
<dbReference type="EMBL" id="Z97179">
    <property type="protein sequence ID" value="CAB09941.1"/>
    <property type="molecule type" value="Genomic_DNA"/>
</dbReference>
<dbReference type="EMBL" id="AL583918">
    <property type="protein sequence ID" value="CAC29914.1"/>
    <property type="molecule type" value="Genomic_DNA"/>
</dbReference>
<dbReference type="PIR" id="S72815">
    <property type="entry name" value="S72815"/>
</dbReference>
<dbReference type="RefSeq" id="NP_301388.1">
    <property type="nucleotide sequence ID" value="NC_002677.1"/>
</dbReference>
<dbReference type="RefSeq" id="WP_010907712.1">
    <property type="nucleotide sequence ID" value="NC_002677.1"/>
</dbReference>
<dbReference type="SMR" id="Q49723"/>
<dbReference type="STRING" id="272631.gene:17574225"/>
<dbReference type="KEGG" id="mle:ML0406"/>
<dbReference type="PATRIC" id="fig|272631.5.peg.689"/>
<dbReference type="Leproma" id="ML0406"/>
<dbReference type="eggNOG" id="ENOG5032HXQ">
    <property type="taxonomic scope" value="Bacteria"/>
</dbReference>
<dbReference type="HOGENOM" id="CLU_177726_0_0_11"/>
<dbReference type="OrthoDB" id="4734983at2"/>
<dbReference type="Proteomes" id="UP000000806">
    <property type="component" value="Chromosome"/>
</dbReference>
<dbReference type="GO" id="GO:0009306">
    <property type="term" value="P:protein secretion"/>
    <property type="evidence" value="ECO:0007669"/>
    <property type="project" value="InterPro"/>
</dbReference>
<dbReference type="InterPro" id="IPR022536">
    <property type="entry name" value="EspC"/>
</dbReference>
<dbReference type="Pfam" id="PF10824">
    <property type="entry name" value="T7SS_ESX_EspC"/>
    <property type="match status" value="1"/>
</dbReference>
<evidence type="ECO:0000305" key="1"/>
<proteinExistence type="inferred from homology"/>
<feature type="chain" id="PRO_0000104140" description="EspC protein homolog">
    <location>
        <begin position="1"/>
        <end position="106"/>
    </location>
</feature>
<protein>
    <recommendedName>
        <fullName>EspC protein homolog</fullName>
    </recommendedName>
</protein>
<reference key="1">
    <citation type="submission" date="1994-03" db="EMBL/GenBank/DDBJ databases">
        <authorList>
            <person name="Smith D.R."/>
            <person name="Robison K."/>
        </authorList>
    </citation>
    <scope>NUCLEOTIDE SEQUENCE [GENOMIC DNA]</scope>
</reference>
<reference key="2">
    <citation type="journal article" date="2001" name="Nature">
        <title>Massive gene decay in the leprosy bacillus.</title>
        <authorList>
            <person name="Cole S.T."/>
            <person name="Eiglmeier K."/>
            <person name="Parkhill J."/>
            <person name="James K.D."/>
            <person name="Thomson N.R."/>
            <person name="Wheeler P.R."/>
            <person name="Honore N."/>
            <person name="Garnier T."/>
            <person name="Churcher C.M."/>
            <person name="Harris D.E."/>
            <person name="Mungall K.L."/>
            <person name="Basham D."/>
            <person name="Brown D."/>
            <person name="Chillingworth T."/>
            <person name="Connor R."/>
            <person name="Davies R.M."/>
            <person name="Devlin K."/>
            <person name="Duthoy S."/>
            <person name="Feltwell T."/>
            <person name="Fraser A."/>
            <person name="Hamlin N."/>
            <person name="Holroyd S."/>
            <person name="Hornsby T."/>
            <person name="Jagels K."/>
            <person name="Lacroix C."/>
            <person name="Maclean J."/>
            <person name="Moule S."/>
            <person name="Murphy L.D."/>
            <person name="Oliver K."/>
            <person name="Quail M.A."/>
            <person name="Rajandream M.A."/>
            <person name="Rutherford K.M."/>
            <person name="Rutter S."/>
            <person name="Seeger K."/>
            <person name="Simon S."/>
            <person name="Simmonds M."/>
            <person name="Skelton J."/>
            <person name="Squares R."/>
            <person name="Squares S."/>
            <person name="Stevens K."/>
            <person name="Taylor K."/>
            <person name="Whitehead S."/>
            <person name="Woodward J.R."/>
            <person name="Barrell B.G."/>
        </authorList>
    </citation>
    <scope>NUCLEOTIDE SEQUENCE [LARGE SCALE GENOMIC DNA]</scope>
    <source>
        <strain>TN</strain>
    </source>
</reference>
<gene>
    <name type="ordered locus">ML0406</name>
    <name type="ORF">B1620_C2_214</name>
    <name type="ORF">MLCL383.02</name>
</gene>
<keyword id="KW-1185">Reference proteome</keyword>
<organism>
    <name type="scientific">Mycobacterium leprae (strain TN)</name>
    <dbReference type="NCBI Taxonomy" id="272631"/>
    <lineage>
        <taxon>Bacteria</taxon>
        <taxon>Bacillati</taxon>
        <taxon>Actinomycetota</taxon>
        <taxon>Actinomycetes</taxon>
        <taxon>Mycobacteriales</taxon>
        <taxon>Mycobacteriaceae</taxon>
        <taxon>Mycobacterium</taxon>
    </lineage>
</organism>
<name>Y406_MYCLE</name>
<accession>Q49723</accession>
<accession>O08216</accession>